<sequence length="95" mass="11009">MKDPRDVLKRPIITERSADLMTEKKYTFEVDVRANKTEVKDAVEEIFGVKVEKVNVQNYKGKSKRVGRYTGMTSRRRKAIVKLTADSKEIEIFEA</sequence>
<gene>
    <name evidence="1" type="primary">rplW</name>
    <name type="ordered locus">BPUM_0104</name>
</gene>
<dbReference type="EMBL" id="CP000813">
    <property type="protein sequence ID" value="ABV60804.1"/>
    <property type="molecule type" value="Genomic_DNA"/>
</dbReference>
<dbReference type="RefSeq" id="WP_003217016.1">
    <property type="nucleotide sequence ID" value="NZ_VEIS01000020.1"/>
</dbReference>
<dbReference type="SMR" id="A8F987"/>
<dbReference type="STRING" id="315750.BPUM_0104"/>
<dbReference type="GeneID" id="66361735"/>
<dbReference type="KEGG" id="bpu:BPUM_0104"/>
<dbReference type="eggNOG" id="COG0089">
    <property type="taxonomic scope" value="Bacteria"/>
</dbReference>
<dbReference type="HOGENOM" id="CLU_037562_3_2_9"/>
<dbReference type="OrthoDB" id="9793353at2"/>
<dbReference type="Proteomes" id="UP000001355">
    <property type="component" value="Chromosome"/>
</dbReference>
<dbReference type="GO" id="GO:1990904">
    <property type="term" value="C:ribonucleoprotein complex"/>
    <property type="evidence" value="ECO:0007669"/>
    <property type="project" value="UniProtKB-KW"/>
</dbReference>
<dbReference type="GO" id="GO:0005840">
    <property type="term" value="C:ribosome"/>
    <property type="evidence" value="ECO:0007669"/>
    <property type="project" value="UniProtKB-KW"/>
</dbReference>
<dbReference type="GO" id="GO:0019843">
    <property type="term" value="F:rRNA binding"/>
    <property type="evidence" value="ECO:0007669"/>
    <property type="project" value="UniProtKB-UniRule"/>
</dbReference>
<dbReference type="GO" id="GO:0003735">
    <property type="term" value="F:structural constituent of ribosome"/>
    <property type="evidence" value="ECO:0007669"/>
    <property type="project" value="InterPro"/>
</dbReference>
<dbReference type="GO" id="GO:0006412">
    <property type="term" value="P:translation"/>
    <property type="evidence" value="ECO:0007669"/>
    <property type="project" value="UniProtKB-UniRule"/>
</dbReference>
<dbReference type="FunFam" id="3.30.70.330:FF:000001">
    <property type="entry name" value="50S ribosomal protein L23"/>
    <property type="match status" value="1"/>
</dbReference>
<dbReference type="Gene3D" id="3.30.70.330">
    <property type="match status" value="1"/>
</dbReference>
<dbReference type="HAMAP" id="MF_01369_B">
    <property type="entry name" value="Ribosomal_uL23_B"/>
    <property type="match status" value="1"/>
</dbReference>
<dbReference type="InterPro" id="IPR012677">
    <property type="entry name" value="Nucleotide-bd_a/b_plait_sf"/>
</dbReference>
<dbReference type="InterPro" id="IPR013025">
    <property type="entry name" value="Ribosomal_uL23-like"/>
</dbReference>
<dbReference type="InterPro" id="IPR012678">
    <property type="entry name" value="Ribosomal_uL23/eL15/eS24_sf"/>
</dbReference>
<dbReference type="InterPro" id="IPR001014">
    <property type="entry name" value="Ribosomal_uL23_CS"/>
</dbReference>
<dbReference type="NCBIfam" id="NF004363">
    <property type="entry name" value="PRK05738.2-4"/>
    <property type="match status" value="1"/>
</dbReference>
<dbReference type="PANTHER" id="PTHR11620">
    <property type="entry name" value="60S RIBOSOMAL PROTEIN L23A"/>
    <property type="match status" value="1"/>
</dbReference>
<dbReference type="Pfam" id="PF00276">
    <property type="entry name" value="Ribosomal_L23"/>
    <property type="match status" value="1"/>
</dbReference>
<dbReference type="SUPFAM" id="SSF54189">
    <property type="entry name" value="Ribosomal proteins S24e, L23 and L15e"/>
    <property type="match status" value="1"/>
</dbReference>
<dbReference type="PROSITE" id="PS00050">
    <property type="entry name" value="RIBOSOMAL_L23"/>
    <property type="match status" value="1"/>
</dbReference>
<comment type="function">
    <text evidence="1">One of the early assembly proteins it binds 23S rRNA. One of the proteins that surrounds the polypeptide exit tunnel on the outside of the ribosome. Forms the main docking site for trigger factor binding to the ribosome.</text>
</comment>
<comment type="subunit">
    <text evidence="1">Part of the 50S ribosomal subunit. Contacts protein L29, and trigger factor when it is bound to the ribosome.</text>
</comment>
<comment type="similarity">
    <text evidence="1">Belongs to the universal ribosomal protein uL23 family.</text>
</comment>
<feature type="chain" id="PRO_1000068041" description="Large ribosomal subunit protein uL23">
    <location>
        <begin position="1"/>
        <end position="95"/>
    </location>
</feature>
<protein>
    <recommendedName>
        <fullName evidence="1">Large ribosomal subunit protein uL23</fullName>
    </recommendedName>
    <alternativeName>
        <fullName evidence="2">50S ribosomal protein L23</fullName>
    </alternativeName>
</protein>
<evidence type="ECO:0000255" key="1">
    <source>
        <dbReference type="HAMAP-Rule" id="MF_01369"/>
    </source>
</evidence>
<evidence type="ECO:0000305" key="2"/>
<accession>A8F987</accession>
<reference key="1">
    <citation type="journal article" date="2007" name="PLoS ONE">
        <title>Paradoxical DNA repair and peroxide resistance gene conservation in Bacillus pumilus SAFR-032.</title>
        <authorList>
            <person name="Gioia J."/>
            <person name="Yerrapragada S."/>
            <person name="Qin X."/>
            <person name="Jiang H."/>
            <person name="Igboeli O.C."/>
            <person name="Muzny D."/>
            <person name="Dugan-Rocha S."/>
            <person name="Ding Y."/>
            <person name="Hawes A."/>
            <person name="Liu W."/>
            <person name="Perez L."/>
            <person name="Kovar C."/>
            <person name="Dinh H."/>
            <person name="Lee S."/>
            <person name="Nazareth L."/>
            <person name="Blyth P."/>
            <person name="Holder M."/>
            <person name="Buhay C."/>
            <person name="Tirumalai M.R."/>
            <person name="Liu Y."/>
            <person name="Dasgupta I."/>
            <person name="Bokhetache L."/>
            <person name="Fujita M."/>
            <person name="Karouia F."/>
            <person name="Eswara Moorthy P."/>
            <person name="Siefert J."/>
            <person name="Uzman A."/>
            <person name="Buzumbo P."/>
            <person name="Verma A."/>
            <person name="Zwiya H."/>
            <person name="McWilliams B.D."/>
            <person name="Olowu A."/>
            <person name="Clinkenbeard K.D."/>
            <person name="Newcombe D."/>
            <person name="Golebiewski L."/>
            <person name="Petrosino J.F."/>
            <person name="Nicholson W.L."/>
            <person name="Fox G.E."/>
            <person name="Venkateswaran K."/>
            <person name="Highlander S.K."/>
            <person name="Weinstock G.M."/>
        </authorList>
    </citation>
    <scope>NUCLEOTIDE SEQUENCE [LARGE SCALE GENOMIC DNA]</scope>
    <source>
        <strain>SAFR-032</strain>
    </source>
</reference>
<organism>
    <name type="scientific">Bacillus pumilus (strain SAFR-032)</name>
    <dbReference type="NCBI Taxonomy" id="315750"/>
    <lineage>
        <taxon>Bacteria</taxon>
        <taxon>Bacillati</taxon>
        <taxon>Bacillota</taxon>
        <taxon>Bacilli</taxon>
        <taxon>Bacillales</taxon>
        <taxon>Bacillaceae</taxon>
        <taxon>Bacillus</taxon>
    </lineage>
</organism>
<name>RL23_BACP2</name>
<keyword id="KW-0687">Ribonucleoprotein</keyword>
<keyword id="KW-0689">Ribosomal protein</keyword>
<keyword id="KW-0694">RNA-binding</keyword>
<keyword id="KW-0699">rRNA-binding</keyword>
<proteinExistence type="inferred from homology"/>